<comment type="function">
    <text evidence="8">Component of the cytochrome c oxidase, the last enzyme in the mitochondrial electron transport chain which drives oxidative phosphorylation. The respiratory chain contains 3 multisubunit complexes succinate dehydrogenase (complex II, CII), ubiquinol-cytochrome c oxidoreductase (cytochrome b-c1 complex, complex III, CIII) and cytochrome c oxidase (complex IV, CIV), that cooperate to transfer electrons derived from NADH and succinate to molecular oxygen, creating an electrochemical gradient over the inner membrane that drives transmembrane transport and the ATP synthase. Cytochrome c oxidase is the component of the respiratory chain that catalyzes the reduction of oxygen to water. Electrons originating from reduced cytochrome c in the intermembrane space (IMS) are transferred via the dinuclear copper A center (CU(A)) of COX2 and heme A of COX1 to the active site in COX1, a binuclear center (BNC) formed by heme A3 and copper B (CU(B)). The BNC reduces molecular oxygen to 2 water molecules using 4 electrons from cytochrome c in the IMS and 4 protons from the mitochondrial matrix.</text>
</comment>
<comment type="pathway">
    <text>Energy metabolism; oxidative phosphorylation.</text>
</comment>
<comment type="subunit">
    <text evidence="1 2 4 5 6">Component of the cytochrome c oxidase (complex IV, CIV), a multisubunit enzyme composed of 12 subunits. The complex is composed of a catalytic core of 3 subunits COX1, COX2 and COX3, encoded in the mitochondrial DNA, and 9 supernumerary subunits COX4, COX5A (or COX5B), COX6, COX7, COX8, COX9, COX12, COX13 and COX26, which are encoded in the nuclear genome (PubMed:30598554, PubMed:30598556, PubMed:7851399). The complex exists as a monomer or a dimer and forms supercomplexes (SCs) in the inner mitochondrial membrane with a dimer of ubiquinol-cytochrome c oxidoreductase (cytochrome b-c1 complex, complex III, CIII), resulting in 2 different assemblies (supercomplexes III(2)IV and III(2)IV(2)) (PubMed:10764779, PubMed:10775262, PubMed:30598554, PubMed:30598556). COX13 interacts with COX1 and COX3 on the intermembrane space (IMS) and COX4 on the matrix side (PubMed:30598554).</text>
</comment>
<comment type="subcellular location">
    <subcellularLocation>
        <location evidence="4">Mitochondrion inner membrane</location>
        <topology evidence="4">Single-pass membrane protein</topology>
    </subcellularLocation>
</comment>
<comment type="similarity">
    <text evidence="7">Belongs to the cytochrome c oxidase subunit 6A family.</text>
</comment>
<evidence type="ECO:0000269" key="1">
    <source>
    </source>
</evidence>
<evidence type="ECO:0000269" key="2">
    <source>
    </source>
</evidence>
<evidence type="ECO:0000269" key="3">
    <source>
    </source>
</evidence>
<evidence type="ECO:0000269" key="4">
    <source>
    </source>
</evidence>
<evidence type="ECO:0000269" key="5">
    <source>
    </source>
</evidence>
<evidence type="ECO:0000269" key="6">
    <source>
    </source>
</evidence>
<evidence type="ECO:0000305" key="7"/>
<evidence type="ECO:0000305" key="8">
    <source>
    </source>
</evidence>
<evidence type="ECO:0007829" key="9">
    <source>
        <dbReference type="PDB" id="6YMX"/>
    </source>
</evidence>
<evidence type="ECO:0007829" key="10">
    <source>
        <dbReference type="PDB" id="6ZDB"/>
    </source>
</evidence>
<evidence type="ECO:0007829" key="11">
    <source>
        <dbReference type="PDB" id="9ETZ"/>
    </source>
</evidence>
<organism>
    <name type="scientific">Saccharomyces cerevisiae (strain ATCC 204508 / S288c)</name>
    <name type="common">Baker's yeast</name>
    <dbReference type="NCBI Taxonomy" id="559292"/>
    <lineage>
        <taxon>Eukaryota</taxon>
        <taxon>Fungi</taxon>
        <taxon>Dikarya</taxon>
        <taxon>Ascomycota</taxon>
        <taxon>Saccharomycotina</taxon>
        <taxon>Saccharomycetes</taxon>
        <taxon>Saccharomycetales</taxon>
        <taxon>Saccharomycetaceae</taxon>
        <taxon>Saccharomyces</taxon>
    </lineage>
</organism>
<accession>P32799</accession>
<accession>D6VTW3</accession>
<keyword id="KW-0002">3D-structure</keyword>
<keyword id="KW-0903">Direct protein sequencing</keyword>
<keyword id="KW-0472">Membrane</keyword>
<keyword id="KW-0496">Mitochondrion</keyword>
<keyword id="KW-0999">Mitochondrion inner membrane</keyword>
<keyword id="KW-0560">Oxidoreductase</keyword>
<keyword id="KW-1185">Reference proteome</keyword>
<keyword id="KW-0809">Transit peptide</keyword>
<keyword id="KW-0812">Transmembrane</keyword>
<keyword id="KW-1133">Transmembrane helix</keyword>
<protein>
    <recommendedName>
        <fullName>Cytochrome c oxidase subunit 13, mitochondrial</fullName>
    </recommendedName>
    <alternativeName>
        <fullName>Cytochrome c oxidase polypeptide VIa</fullName>
    </alternativeName>
</protein>
<proteinExistence type="evidence at protein level"/>
<sequence>MFRQCAKRYASSLPPNALKPAFGPPDKVAAQKFKESLMATEKHAKDTSNMWVKISVWVALPAIALTAVNTYFVEKEHAEHREHLKHVPDSEWPRDYEFMNIRSKPFFWGDGDKTLFWNPVVNRHIEHDD</sequence>
<reference key="1">
    <citation type="journal article" date="1993" name="J. Biol. Chem.">
        <title>Subunit VIa of yeast cytochrome c oxidase is not necessary for assembly of the enzyme complex but modulates the enzyme activity. Isolation and characterization of the nuclear-coded gene.</title>
        <authorList>
            <person name="Taanman J.-W."/>
            <person name="Capaldi R.A."/>
        </authorList>
    </citation>
    <scope>NUCLEOTIDE SEQUENCE [GENOMIC DNA]</scope>
    <source>
        <strain>S288c / GRF88</strain>
    </source>
</reference>
<reference key="2">
    <citation type="journal article" date="1997" name="Yeast">
        <title>Sequencing of a 40.5 kb fragment located on the left arm of chromosome VII from Saccharomyces cerevisiae.</title>
        <authorList>
            <person name="Coglievina M."/>
            <person name="Klima R."/>
            <person name="Bertani I."/>
            <person name="Delneri D."/>
            <person name="Zaccaria P."/>
            <person name="Bruschi C.V."/>
        </authorList>
    </citation>
    <scope>NUCLEOTIDE SEQUENCE [GENOMIC DNA]</scope>
    <source>
        <strain>ATCC 96604 / S288c / FY1679</strain>
    </source>
</reference>
<reference key="3">
    <citation type="journal article" date="1997" name="Nature">
        <title>The nucleotide sequence of Saccharomyces cerevisiae chromosome VII.</title>
        <authorList>
            <person name="Tettelin H."/>
            <person name="Agostoni-Carbone M.L."/>
            <person name="Albermann K."/>
            <person name="Albers M."/>
            <person name="Arroyo J."/>
            <person name="Backes U."/>
            <person name="Barreiros T."/>
            <person name="Bertani I."/>
            <person name="Bjourson A.J."/>
            <person name="Brueckner M."/>
            <person name="Bruschi C.V."/>
            <person name="Carignani G."/>
            <person name="Castagnoli L."/>
            <person name="Cerdan E."/>
            <person name="Clemente M.L."/>
            <person name="Coblenz A."/>
            <person name="Coglievina M."/>
            <person name="Coissac E."/>
            <person name="Defoor E."/>
            <person name="Del Bino S."/>
            <person name="Delius H."/>
            <person name="Delneri D."/>
            <person name="de Wergifosse P."/>
            <person name="Dujon B."/>
            <person name="Durand P."/>
            <person name="Entian K.-D."/>
            <person name="Eraso P."/>
            <person name="Escribano V."/>
            <person name="Fabiani L."/>
            <person name="Fartmann B."/>
            <person name="Feroli F."/>
            <person name="Feuermann M."/>
            <person name="Frontali L."/>
            <person name="Garcia-Gonzalez M."/>
            <person name="Garcia-Saez M.I."/>
            <person name="Goffeau A."/>
            <person name="Guerreiro P."/>
            <person name="Hani J."/>
            <person name="Hansen M."/>
            <person name="Hebling U."/>
            <person name="Hernandez K."/>
            <person name="Heumann K."/>
            <person name="Hilger F."/>
            <person name="Hofmann B."/>
            <person name="Indge K.J."/>
            <person name="James C.M."/>
            <person name="Klima R."/>
            <person name="Koetter P."/>
            <person name="Kramer B."/>
            <person name="Kramer W."/>
            <person name="Lauquin G."/>
            <person name="Leuther H."/>
            <person name="Louis E.J."/>
            <person name="Maillier E."/>
            <person name="Marconi A."/>
            <person name="Martegani E."/>
            <person name="Mazon M.J."/>
            <person name="Mazzoni C."/>
            <person name="McReynolds A.D.K."/>
            <person name="Melchioretto P."/>
            <person name="Mewes H.-W."/>
            <person name="Minenkova O."/>
            <person name="Mueller-Auer S."/>
            <person name="Nawrocki A."/>
            <person name="Netter P."/>
            <person name="Neu R."/>
            <person name="Nombela C."/>
            <person name="Oliver S.G."/>
            <person name="Panzeri L."/>
            <person name="Paoluzi S."/>
            <person name="Plevani P."/>
            <person name="Portetelle D."/>
            <person name="Portillo F."/>
            <person name="Potier S."/>
            <person name="Purnelle B."/>
            <person name="Rieger M."/>
            <person name="Riles L."/>
            <person name="Rinaldi T."/>
            <person name="Robben J."/>
            <person name="Rodrigues-Pousada C."/>
            <person name="Rodriguez-Belmonte E."/>
            <person name="Rodriguez-Torres A.M."/>
            <person name="Rose M."/>
            <person name="Ruzzi M."/>
            <person name="Saliola M."/>
            <person name="Sanchez-Perez M."/>
            <person name="Schaefer B."/>
            <person name="Schaefer M."/>
            <person name="Scharfe M."/>
            <person name="Schmidheini T."/>
            <person name="Schreer A."/>
            <person name="Skala J."/>
            <person name="Souciet J.-L."/>
            <person name="Steensma H.Y."/>
            <person name="Talla E."/>
            <person name="Thierry A."/>
            <person name="Vandenbol M."/>
            <person name="van der Aart Q.J.M."/>
            <person name="Van Dyck L."/>
            <person name="Vanoni M."/>
            <person name="Verhasselt P."/>
            <person name="Voet M."/>
            <person name="Volckaert G."/>
            <person name="Wambutt R."/>
            <person name="Watson M.D."/>
            <person name="Weber N."/>
            <person name="Wedler E."/>
            <person name="Wedler H."/>
            <person name="Wipfli P."/>
            <person name="Wolf K."/>
            <person name="Wright L.F."/>
            <person name="Zaccaria P."/>
            <person name="Zimmermann M."/>
            <person name="Zollner A."/>
            <person name="Kleine K."/>
        </authorList>
    </citation>
    <scope>NUCLEOTIDE SEQUENCE [LARGE SCALE GENOMIC DNA]</scope>
    <source>
        <strain>ATCC 204508 / S288c</strain>
    </source>
</reference>
<reference key="4">
    <citation type="journal article" date="2014" name="G3 (Bethesda)">
        <title>The reference genome sequence of Saccharomyces cerevisiae: Then and now.</title>
        <authorList>
            <person name="Engel S.R."/>
            <person name="Dietrich F.S."/>
            <person name="Fisk D.G."/>
            <person name="Binkley G."/>
            <person name="Balakrishnan R."/>
            <person name="Costanzo M.C."/>
            <person name="Dwight S.S."/>
            <person name="Hitz B.C."/>
            <person name="Karra K."/>
            <person name="Nash R.S."/>
            <person name="Weng S."/>
            <person name="Wong E.D."/>
            <person name="Lloyd P."/>
            <person name="Skrzypek M.S."/>
            <person name="Miyasato S.R."/>
            <person name="Simison M."/>
            <person name="Cherry J.M."/>
        </authorList>
    </citation>
    <scope>GENOME REANNOTATION</scope>
    <source>
        <strain>ATCC 204508 / S288c</strain>
    </source>
</reference>
<reference key="5">
    <citation type="journal article" date="2007" name="Genome Res.">
        <title>Approaching a complete repository of sequence-verified protein-encoding clones for Saccharomyces cerevisiae.</title>
        <authorList>
            <person name="Hu Y."/>
            <person name="Rolfs A."/>
            <person name="Bhullar B."/>
            <person name="Murthy T.V.S."/>
            <person name="Zhu C."/>
            <person name="Berger M.F."/>
            <person name="Camargo A.A."/>
            <person name="Kelley F."/>
            <person name="McCarron S."/>
            <person name="Jepson D."/>
            <person name="Richardson A."/>
            <person name="Raphael J."/>
            <person name="Moreira D."/>
            <person name="Taycher E."/>
            <person name="Zuo D."/>
            <person name="Mohr S."/>
            <person name="Kane M.F."/>
            <person name="Williamson J."/>
            <person name="Simpson A.J.G."/>
            <person name="Bulyk M.L."/>
            <person name="Harlow E."/>
            <person name="Marsischky G."/>
            <person name="Kolodner R.D."/>
            <person name="LaBaer J."/>
        </authorList>
    </citation>
    <scope>NUCLEOTIDE SEQUENCE [GENOMIC DNA]</scope>
    <source>
        <strain>ATCC 204508 / S288c</strain>
    </source>
</reference>
<reference key="6">
    <citation type="journal article" date="1992" name="J. Biol. Chem.">
        <title>Purification of yeast cytochrome c oxidase with a subunit composition resembling the mammalian enzyme.</title>
        <authorList>
            <person name="Taanman J.-W."/>
            <person name="Capaldi R.A."/>
        </authorList>
    </citation>
    <scope>PARTIAL PROTEIN SEQUENCE</scope>
    <scope>COMPOSITION OF THE CYTOCHROME C OXIDASE COMPLEX</scope>
</reference>
<reference key="7">
    <citation type="journal article" date="1995" name="Eur. J. Biochem.">
        <title>Kinetic properties and ligand binding of the eleven-subunit cytochrome-c oxidase from Saccharomyces cerevisiae isolated with a novel large-scale purification method.</title>
        <authorList>
            <person name="Geier B.M."/>
            <person name="Schagger H."/>
            <person name="Ortwein C."/>
            <person name="Link T.A."/>
            <person name="Hagen W.R."/>
            <person name="Brandt U."/>
            <person name="Von Jagow G."/>
        </authorList>
    </citation>
    <scope>PROTEIN SEQUENCE OF 10-12</scope>
    <scope>COMPOSITION OF THE CYTOCHROME C OXIDASE COMPLEX</scope>
</reference>
<reference key="8">
    <citation type="journal article" date="2000" name="EMBO J.">
        <title>Supercomplexes in the respiratory chains of yeast and mammalian mitochondria.</title>
        <authorList>
            <person name="Schaegger H."/>
            <person name="Pfeiffer K."/>
        </authorList>
    </citation>
    <scope>FORMATION OF CYTOCHROME BC1-CYTOCHROME C OXIDASE SUPERCOMPLEX</scope>
</reference>
<reference key="9">
    <citation type="journal article" date="2000" name="J. Biol. Chem.">
        <title>The cytochrome bc1 and cytochrome c oxidase complexes associate to form a single supracomplex in yeast mitochondria.</title>
        <authorList>
            <person name="Cruciat C.M."/>
            <person name="Brunner S."/>
            <person name="Baumann F."/>
            <person name="Neupert W."/>
            <person name="Stuart R.A."/>
        </authorList>
    </citation>
    <scope>FORMATION OF CYTOCHROME BC1-CYTOCHROME C OXIDASE SUPERCOMPLEX</scope>
</reference>
<reference key="10">
    <citation type="journal article" date="2019" name="Nat. Struct. Mol. Biol.">
        <title>Cryo-EM structure of the yeast respiratory supercomplex.</title>
        <authorList>
            <person name="Rathore S."/>
            <person name="Berndtsson J."/>
            <person name="Marin-Buera L."/>
            <person name="Conrad J."/>
            <person name="Carroni M."/>
            <person name="Brzezinski P."/>
            <person name="Ott M."/>
        </authorList>
    </citation>
    <scope>STRUCTURE BY ELECTRON MICROSCOPY (3.23 ANGSTROMS) OF 57-74</scope>
</reference>
<reference key="11">
    <citation type="journal article" date="2019" name="Nat. Struct. Mol. Biol.">
        <title>Structure of yeast cytochrome c oxidase in a supercomplex with cytochrome bc1.</title>
        <authorList>
            <person name="Hartley A.M."/>
            <person name="Lukoyanova N."/>
            <person name="Zhang Y."/>
            <person name="Cabrera-Orefice A."/>
            <person name="Arnold S."/>
            <person name="Meunier B."/>
            <person name="Pinotsis N."/>
            <person name="Marechal A."/>
        </authorList>
    </citation>
    <scope>STRUCTURE BY ELECTRON MICROSCOPY (3.35 ANGSTROMS)</scope>
    <scope>FUNCTION</scope>
</reference>
<dbReference type="EMBL" id="X72970">
    <property type="protein sequence ID" value="CAA51479.1"/>
    <property type="molecule type" value="Genomic_DNA"/>
</dbReference>
<dbReference type="EMBL" id="X91837">
    <property type="protein sequence ID" value="CAA62953.1"/>
    <property type="molecule type" value="Genomic_DNA"/>
</dbReference>
<dbReference type="EMBL" id="Z72713">
    <property type="protein sequence ID" value="CAA96903.1"/>
    <property type="molecule type" value="Genomic_DNA"/>
</dbReference>
<dbReference type="EMBL" id="AY558489">
    <property type="protein sequence ID" value="AAS56815.1"/>
    <property type="molecule type" value="Genomic_DNA"/>
</dbReference>
<dbReference type="EMBL" id="BK006941">
    <property type="protein sequence ID" value="DAA07924.1"/>
    <property type="molecule type" value="Genomic_DNA"/>
</dbReference>
<dbReference type="PIR" id="A48520">
    <property type="entry name" value="A48520"/>
</dbReference>
<dbReference type="RefSeq" id="NP_011324.1">
    <property type="nucleotide sequence ID" value="NM_001181056.1"/>
</dbReference>
<dbReference type="PDB" id="6GIQ">
    <property type="method" value="EM"/>
    <property type="resolution" value="3.23 A"/>
    <property type="chains" value="k=1-129"/>
</dbReference>
<dbReference type="PDB" id="6HU9">
    <property type="method" value="EM"/>
    <property type="resolution" value="3.35 A"/>
    <property type="chains" value="k/w=10-129"/>
</dbReference>
<dbReference type="PDB" id="6T0B">
    <property type="method" value="EM"/>
    <property type="resolution" value="2.80 A"/>
    <property type="chains" value="k/x=10-129"/>
</dbReference>
<dbReference type="PDB" id="6T15">
    <property type="method" value="EM"/>
    <property type="resolution" value="3.29 A"/>
    <property type="chains" value="k=10-129"/>
</dbReference>
<dbReference type="PDB" id="6YMX">
    <property type="method" value="EM"/>
    <property type="resolution" value="3.17 A"/>
    <property type="chains" value="k=16-129"/>
</dbReference>
<dbReference type="PDB" id="6YMY">
    <property type="method" value="EM"/>
    <property type="resolution" value="3.41 A"/>
    <property type="chains" value="k=16-129"/>
</dbReference>
<dbReference type="PDB" id="6ZDB">
    <property type="method" value="NMR"/>
    <property type="chains" value="A/B=1-129"/>
</dbReference>
<dbReference type="PDB" id="8E7S">
    <property type="method" value="EM"/>
    <property type="resolution" value="3.20 A"/>
    <property type="chains" value="S/s=1-129"/>
</dbReference>
<dbReference type="PDB" id="8EC0">
    <property type="method" value="EM"/>
    <property type="resolution" value="3.30 A"/>
    <property type="chains" value="S=1-129"/>
</dbReference>
<dbReference type="PDB" id="9ETZ">
    <property type="method" value="EM"/>
    <property type="resolution" value="2.40 A"/>
    <property type="chains" value="k=13-125"/>
</dbReference>
<dbReference type="PDBsum" id="6GIQ"/>
<dbReference type="PDBsum" id="6HU9"/>
<dbReference type="PDBsum" id="6T0B"/>
<dbReference type="PDBsum" id="6T15"/>
<dbReference type="PDBsum" id="6YMX"/>
<dbReference type="PDBsum" id="6YMY"/>
<dbReference type="PDBsum" id="6ZDB"/>
<dbReference type="PDBsum" id="8E7S"/>
<dbReference type="PDBsum" id="8EC0"/>
<dbReference type="PDBsum" id="9ETZ"/>
<dbReference type="EMDB" id="EMD-10334"/>
<dbReference type="EMDB" id="EMD-10847"/>
<dbReference type="EMDB" id="EMD-10848"/>
<dbReference type="EMDB" id="EMD-19963"/>
<dbReference type="EMDB" id="EMD-27940"/>
<dbReference type="EMDB" id="EMD-28011"/>
<dbReference type="SMR" id="P32799"/>
<dbReference type="BioGRID" id="33065">
    <property type="interactions" value="81"/>
</dbReference>
<dbReference type="ComplexPortal" id="CPX-1721">
    <property type="entry name" value="Mitochondrial respiratory chain complex IV, COX5A variant"/>
</dbReference>
<dbReference type="ComplexPortal" id="CPX-1722">
    <property type="entry name" value="Mitochondrial respiratory chain complex IV, COX5B variant"/>
</dbReference>
<dbReference type="FunCoup" id="P32799">
    <property type="interactions" value="366"/>
</dbReference>
<dbReference type="IntAct" id="P32799">
    <property type="interactions" value="45"/>
</dbReference>
<dbReference type="STRING" id="4932.YGL191W"/>
<dbReference type="TCDB" id="3.D.4.8.1">
    <property type="family name" value="the proton-translocating cytochrome oxidase (cox) superfamily"/>
</dbReference>
<dbReference type="PaxDb" id="4932-YGL191W"/>
<dbReference type="PeptideAtlas" id="P32799"/>
<dbReference type="EnsemblFungi" id="YGL191W_mRNA">
    <property type="protein sequence ID" value="YGL191W"/>
    <property type="gene ID" value="YGL191W"/>
</dbReference>
<dbReference type="GeneID" id="852684"/>
<dbReference type="KEGG" id="sce:YGL191W"/>
<dbReference type="AGR" id="SGD:S000003159"/>
<dbReference type="SGD" id="S000003159">
    <property type="gene designation" value="COX13"/>
</dbReference>
<dbReference type="VEuPathDB" id="FungiDB:YGL191W"/>
<dbReference type="eggNOG" id="KOG3469">
    <property type="taxonomic scope" value="Eukaryota"/>
</dbReference>
<dbReference type="GeneTree" id="ENSGT00940000168355"/>
<dbReference type="HOGENOM" id="CLU_122515_0_1_1"/>
<dbReference type="InParanoid" id="P32799"/>
<dbReference type="OMA" id="KLPWMVD"/>
<dbReference type="OrthoDB" id="5947505at2759"/>
<dbReference type="BioCyc" id="MetaCyc:YGL191W-MONOMER"/>
<dbReference type="BioCyc" id="YEAST:YGL191W-MONOMER"/>
<dbReference type="UniPathway" id="UPA00705"/>
<dbReference type="BioGRID-ORCS" id="852684">
    <property type="hits" value="1 hit in 10 CRISPR screens"/>
</dbReference>
<dbReference type="PRO" id="PR:P32799"/>
<dbReference type="Proteomes" id="UP000002311">
    <property type="component" value="Chromosome VII"/>
</dbReference>
<dbReference type="RNAct" id="P32799">
    <property type="molecule type" value="protein"/>
</dbReference>
<dbReference type="GO" id="GO:0005743">
    <property type="term" value="C:mitochondrial inner membrane"/>
    <property type="evidence" value="ECO:0007669"/>
    <property type="project" value="UniProtKB-SubCell"/>
</dbReference>
<dbReference type="GO" id="GO:0005739">
    <property type="term" value="C:mitochondrion"/>
    <property type="evidence" value="ECO:0000314"/>
    <property type="project" value="SGD"/>
</dbReference>
<dbReference type="GO" id="GO:0045277">
    <property type="term" value="C:respiratory chain complex IV"/>
    <property type="evidence" value="ECO:0000314"/>
    <property type="project" value="SGD"/>
</dbReference>
<dbReference type="GO" id="GO:0030234">
    <property type="term" value="F:enzyme regulator activity"/>
    <property type="evidence" value="ECO:0000314"/>
    <property type="project" value="SGD"/>
</dbReference>
<dbReference type="GO" id="GO:0016491">
    <property type="term" value="F:oxidoreductase activity"/>
    <property type="evidence" value="ECO:0007669"/>
    <property type="project" value="UniProtKB-KW"/>
</dbReference>
<dbReference type="GO" id="GO:0009060">
    <property type="term" value="P:aerobic respiration"/>
    <property type="evidence" value="ECO:0000315"/>
    <property type="project" value="SGD"/>
</dbReference>
<dbReference type="GO" id="GO:0006123">
    <property type="term" value="P:mitochondrial electron transport, cytochrome c to oxygen"/>
    <property type="evidence" value="ECO:0000318"/>
    <property type="project" value="GO_Central"/>
</dbReference>
<dbReference type="GO" id="GO:0097250">
    <property type="term" value="P:mitochondrial respirasome assembly"/>
    <property type="evidence" value="ECO:0000315"/>
    <property type="project" value="SGD"/>
</dbReference>
<dbReference type="GO" id="GO:1902600">
    <property type="term" value="P:proton transmembrane transport"/>
    <property type="evidence" value="ECO:0007669"/>
    <property type="project" value="GOC"/>
</dbReference>
<dbReference type="CDD" id="cd00925">
    <property type="entry name" value="Cyt_c_Oxidase_VIa"/>
    <property type="match status" value="1"/>
</dbReference>
<dbReference type="FunFam" id="4.10.95.10:FF:000001">
    <property type="entry name" value="Cytochrome c oxidase subunit 6A, mitochondrial"/>
    <property type="match status" value="1"/>
</dbReference>
<dbReference type="Gene3D" id="4.10.95.10">
    <property type="entry name" value="Cytochrome c oxidase, subunit VIa"/>
    <property type="match status" value="1"/>
</dbReference>
<dbReference type="InterPro" id="IPR001349">
    <property type="entry name" value="Cyt_c_oxidase_su6a"/>
</dbReference>
<dbReference type="InterPro" id="IPR018507">
    <property type="entry name" value="Cyt_c_oxidase_su6a_CS"/>
</dbReference>
<dbReference type="InterPro" id="IPR036418">
    <property type="entry name" value="Cyt_c_oxidase_su6a_sf"/>
</dbReference>
<dbReference type="PANTHER" id="PTHR11504">
    <property type="entry name" value="CYTOCHROME C OXIDASE POLYPEPTIDE VIA"/>
    <property type="match status" value="1"/>
</dbReference>
<dbReference type="PANTHER" id="PTHR11504:SF0">
    <property type="entry name" value="CYTOCHROME C OXIDASE SUBUNIT"/>
    <property type="match status" value="1"/>
</dbReference>
<dbReference type="Pfam" id="PF02046">
    <property type="entry name" value="COX6A"/>
    <property type="match status" value="1"/>
</dbReference>
<dbReference type="PIRSF" id="PIRSF000277">
    <property type="entry name" value="COX6A1"/>
    <property type="match status" value="1"/>
</dbReference>
<dbReference type="SUPFAM" id="SSF81411">
    <property type="entry name" value="Mitochondrial cytochrome c oxidase subunit VIa"/>
    <property type="match status" value="1"/>
</dbReference>
<dbReference type="PROSITE" id="PS01329">
    <property type="entry name" value="COX6A"/>
    <property type="match status" value="1"/>
</dbReference>
<feature type="transit peptide" description="Mitochondrion" evidence="3 6">
    <location>
        <begin position="1"/>
        <end position="9"/>
    </location>
</feature>
<feature type="chain" id="PRO_0000006127" description="Cytochrome c oxidase subunit 13, mitochondrial">
    <location>
        <begin position="10"/>
        <end position="129"/>
    </location>
</feature>
<feature type="topological domain" description="Mitochondrial matrix" evidence="4">
    <location>
        <begin position="10"/>
        <end position="43"/>
    </location>
</feature>
<feature type="transmembrane region" description="Helical" evidence="4">
    <location>
        <begin position="44"/>
        <end position="71"/>
    </location>
</feature>
<feature type="topological domain" description="Mitochondrial intermembrane" evidence="4">
    <location>
        <begin position="72"/>
        <end position="129"/>
    </location>
</feature>
<feature type="helix" evidence="11">
    <location>
        <begin position="15"/>
        <end position="18"/>
    </location>
</feature>
<feature type="helix" evidence="11">
    <location>
        <begin position="27"/>
        <end position="57"/>
    </location>
</feature>
<feature type="helix" evidence="11">
    <location>
        <begin position="59"/>
        <end position="84"/>
    </location>
</feature>
<feature type="helix" evidence="11">
    <location>
        <begin position="89"/>
        <end position="91"/>
    </location>
</feature>
<feature type="turn" evidence="9">
    <location>
        <begin position="97"/>
        <end position="99"/>
    </location>
</feature>
<feature type="helix" evidence="10">
    <location>
        <begin position="103"/>
        <end position="106"/>
    </location>
</feature>
<feature type="strand" evidence="9">
    <location>
        <begin position="107"/>
        <end position="111"/>
    </location>
</feature>
<feature type="strand" evidence="9">
    <location>
        <begin position="114"/>
        <end position="116"/>
    </location>
</feature>
<feature type="turn" evidence="11">
    <location>
        <begin position="119"/>
        <end position="121"/>
    </location>
</feature>
<name>COX13_YEAST</name>
<gene>
    <name type="primary">COX13</name>
    <name type="ordered locus">YGL191W</name>
    <name type="ORF">G1341</name>
</gene>